<dbReference type="EC" id="1.11.1.-"/>
<dbReference type="EMBL" id="X74791">
    <property type="protein sequence ID" value="CAA52796.1"/>
    <property type="molecule type" value="Genomic_DNA"/>
</dbReference>
<dbReference type="EMBL" id="FR845719">
    <property type="protein sequence ID" value="CCA58146.1"/>
    <property type="molecule type" value="Genomic_DNA"/>
</dbReference>
<dbReference type="PIR" id="S37055">
    <property type="entry name" value="S37055"/>
</dbReference>
<dbReference type="RefSeq" id="WP_015036046.1">
    <property type="nucleotide sequence ID" value="NZ_JABVZO010000021.1"/>
</dbReference>
<dbReference type="SMR" id="P33569"/>
<dbReference type="STRING" id="953739.SVEN_4860"/>
<dbReference type="KEGG" id="sve:SVEN_4860"/>
<dbReference type="PATRIC" id="fig|953739.5.peg.7372"/>
<dbReference type="eggNOG" id="COG0753">
    <property type="taxonomic scope" value="Bacteria"/>
</dbReference>
<dbReference type="HOGENOM" id="CLU_010645_2_0_11"/>
<dbReference type="OrthoDB" id="3169619at2"/>
<dbReference type="Proteomes" id="UP000006854">
    <property type="component" value="Chromosome"/>
</dbReference>
<dbReference type="GO" id="GO:0005737">
    <property type="term" value="C:cytoplasm"/>
    <property type="evidence" value="ECO:0007669"/>
    <property type="project" value="TreeGrafter"/>
</dbReference>
<dbReference type="GO" id="GO:0004096">
    <property type="term" value="F:catalase activity"/>
    <property type="evidence" value="ECO:0007669"/>
    <property type="project" value="InterPro"/>
</dbReference>
<dbReference type="GO" id="GO:0020037">
    <property type="term" value="F:heme binding"/>
    <property type="evidence" value="ECO:0007669"/>
    <property type="project" value="InterPro"/>
</dbReference>
<dbReference type="GO" id="GO:0046872">
    <property type="term" value="F:metal ion binding"/>
    <property type="evidence" value="ECO:0007669"/>
    <property type="project" value="UniProtKB-KW"/>
</dbReference>
<dbReference type="GO" id="GO:0042744">
    <property type="term" value="P:hydrogen peroxide catabolic process"/>
    <property type="evidence" value="ECO:0007669"/>
    <property type="project" value="UniProtKB-KW"/>
</dbReference>
<dbReference type="GO" id="GO:0042542">
    <property type="term" value="P:response to hydrogen peroxide"/>
    <property type="evidence" value="ECO:0007669"/>
    <property type="project" value="TreeGrafter"/>
</dbReference>
<dbReference type="CDD" id="cd08156">
    <property type="entry name" value="catalase_clade_3"/>
    <property type="match status" value="1"/>
</dbReference>
<dbReference type="FunFam" id="2.40.180.10:FF:000001">
    <property type="entry name" value="Catalase"/>
    <property type="match status" value="1"/>
</dbReference>
<dbReference type="Gene3D" id="2.40.180.10">
    <property type="entry name" value="Catalase core domain"/>
    <property type="match status" value="1"/>
</dbReference>
<dbReference type="InterPro" id="IPR018028">
    <property type="entry name" value="Catalase"/>
</dbReference>
<dbReference type="InterPro" id="IPR040333">
    <property type="entry name" value="Catalase_3"/>
</dbReference>
<dbReference type="InterPro" id="IPR024708">
    <property type="entry name" value="Catalase_AS"/>
</dbReference>
<dbReference type="InterPro" id="IPR024711">
    <property type="entry name" value="Catalase_clade1/3"/>
</dbReference>
<dbReference type="InterPro" id="IPR011614">
    <property type="entry name" value="Catalase_core"/>
</dbReference>
<dbReference type="InterPro" id="IPR002226">
    <property type="entry name" value="Catalase_haem_BS"/>
</dbReference>
<dbReference type="InterPro" id="IPR010582">
    <property type="entry name" value="Catalase_immune_responsive"/>
</dbReference>
<dbReference type="InterPro" id="IPR020835">
    <property type="entry name" value="Catalase_sf"/>
</dbReference>
<dbReference type="PANTHER" id="PTHR11465">
    <property type="entry name" value="CATALASE"/>
    <property type="match status" value="1"/>
</dbReference>
<dbReference type="PANTHER" id="PTHR11465:SF9">
    <property type="entry name" value="CATALASE"/>
    <property type="match status" value="1"/>
</dbReference>
<dbReference type="Pfam" id="PF00199">
    <property type="entry name" value="Catalase"/>
    <property type="match status" value="1"/>
</dbReference>
<dbReference type="Pfam" id="PF06628">
    <property type="entry name" value="Catalase-rel"/>
    <property type="match status" value="1"/>
</dbReference>
<dbReference type="PIRSF" id="PIRSF038928">
    <property type="entry name" value="Catalase_clade1-3"/>
    <property type="match status" value="1"/>
</dbReference>
<dbReference type="PRINTS" id="PR00067">
    <property type="entry name" value="CATALASE"/>
</dbReference>
<dbReference type="SMART" id="SM01060">
    <property type="entry name" value="Catalase"/>
    <property type="match status" value="1"/>
</dbReference>
<dbReference type="SUPFAM" id="SSF56634">
    <property type="entry name" value="Heme-dependent catalase-like"/>
    <property type="match status" value="1"/>
</dbReference>
<dbReference type="PROSITE" id="PS00437">
    <property type="entry name" value="CATALASE_1"/>
    <property type="match status" value="1"/>
</dbReference>
<dbReference type="PROSITE" id="PS00438">
    <property type="entry name" value="CATALASE_2"/>
    <property type="match status" value="1"/>
</dbReference>
<dbReference type="PROSITE" id="PS51402">
    <property type="entry name" value="CATALASE_3"/>
    <property type="match status" value="1"/>
</dbReference>
<feature type="chain" id="PRO_0000085018" description="Bromoperoxidase-catalase">
    <location>
        <begin position="1"/>
        <end position="483"/>
    </location>
</feature>
<feature type="region of interest" description="Disordered" evidence="3">
    <location>
        <begin position="1"/>
        <end position="24"/>
    </location>
</feature>
<feature type="active site" evidence="2">
    <location>
        <position position="54"/>
    </location>
</feature>
<feature type="active site" evidence="2">
    <location>
        <position position="127"/>
    </location>
</feature>
<feature type="binding site" description="axial binding residue" evidence="1">
    <location>
        <position position="337"/>
    </location>
    <ligand>
        <name>heme</name>
        <dbReference type="ChEBI" id="CHEBI:30413"/>
    </ligand>
    <ligandPart>
        <name>Fe</name>
        <dbReference type="ChEBI" id="CHEBI:18248"/>
    </ligandPart>
</feature>
<gene>
    <name type="primary">bca</name>
    <name type="ordered locus">SVEN_4860</name>
</gene>
<sequence>MTQGPLTTEAGAPVADNQNSETAGVGGPVLVQDQLLLEKLAHFNRERIPERVVHARGAGAYGTFTLTRDVSRWTRAAFLSEVGKRTETFLRFSTVAGSLGAADAVRDPRGWALKFYTEEGNYDLVGNNTPVFFIKDAIKFPDFIHTQKRDPYTGSQEADNVWDFWGLSPESTHQVTWLFGDRGIPASYRHMNGYGSHTYQWNNEAGEVFWVKYHFKTDQGIKNLTQDEANRLAGEDPDSHQRDLREAIERGDFPTWTVQVQIMPAADAAGYRFNPFDLTKVWPHEDYPPVEIGTLELNRNPENIFAEVEQSIFSPAHFVPGIGPSPDKMLQGRLFAYGDAHRYRVGINADHLPVNRPHATEARTHSRDGFLYDGRHKGAKNYEPNSFGGPVQTDRPLWQPTPVTGVTGDHAAPSHAEDDDFTQAGDLYRLMSEDEKGRLIDNLSGFIAKVSRDDIAERAIGNFRRADEDFGKRLEAAVQALRG</sequence>
<reference key="1">
    <citation type="journal article" date="1996" name="Microbiology">
        <title>Cloning, sequencing and disruption of a bromoperoxidase-catalase gene in Streptomyces venezuelae: evidence that it is not required for chlorination in chloramphenicol biosynthesis.</title>
        <authorList>
            <person name="Facey S."/>
            <person name="Gross F."/>
            <person name="Vining L.C."/>
            <person name="Yang K."/>
            <person name="van Pee K.-H."/>
        </authorList>
    </citation>
    <scope>NUCLEOTIDE SEQUENCE [GENOMIC DNA]</scope>
    <scope>PARTIAL PROTEIN SEQUENCE</scope>
    <source>
        <strain>ATCC 10712 / CBS 650.69 / DSM 40230 / JCM 4526 / NBRC 13096 / PD 04745</strain>
    </source>
</reference>
<reference key="2">
    <citation type="journal article" date="2011" name="BMC Genomics">
        <title>Genome-wide analysis of the role of GlnR in Streptomyces venezuelae provides new insights into global nitrogen regulation in actinomycetes.</title>
        <authorList>
            <person name="Pullan S.T."/>
            <person name="Chandra G."/>
            <person name="Bibb M.J."/>
            <person name="Merrick M."/>
        </authorList>
    </citation>
    <scope>NUCLEOTIDE SEQUENCE [LARGE SCALE GENOMIC DNA]</scope>
    <source>
        <strain>ATCC 10712 / CBS 650.69 / DSM 40230 / JCM 4526 / NBRC 13096 / PD 04745</strain>
    </source>
</reference>
<name>BCA_STRVP</name>
<proteinExistence type="evidence at protein level"/>
<organism>
    <name type="scientific">Streptomyces venezuelae (strain ATCC 10712 / CBS 650.69 / DSM 40230 / JCM 4526 / NBRC 13096 / PD 04745)</name>
    <dbReference type="NCBI Taxonomy" id="953739"/>
    <lineage>
        <taxon>Bacteria</taxon>
        <taxon>Bacillati</taxon>
        <taxon>Actinomycetota</taxon>
        <taxon>Actinomycetes</taxon>
        <taxon>Kitasatosporales</taxon>
        <taxon>Streptomycetaceae</taxon>
        <taxon>Streptomyces</taxon>
    </lineage>
</organism>
<protein>
    <recommendedName>
        <fullName>Bromoperoxidase-catalase</fullName>
        <ecNumber>1.11.1.-</ecNumber>
    </recommendedName>
</protein>
<comment type="catalytic activity">
    <reaction evidence="2">
        <text>2 H2O2 = O2 + 2 H2O</text>
        <dbReference type="Rhea" id="RHEA:20309"/>
        <dbReference type="ChEBI" id="CHEBI:15377"/>
        <dbReference type="ChEBI" id="CHEBI:15379"/>
        <dbReference type="ChEBI" id="CHEBI:16240"/>
    </reaction>
</comment>
<comment type="similarity">
    <text evidence="4">Belongs to the catalase family.</text>
</comment>
<evidence type="ECO:0000250" key="1"/>
<evidence type="ECO:0000255" key="2">
    <source>
        <dbReference type="PROSITE-ProRule" id="PRU10013"/>
    </source>
</evidence>
<evidence type="ECO:0000256" key="3">
    <source>
        <dbReference type="SAM" id="MobiDB-lite"/>
    </source>
</evidence>
<evidence type="ECO:0000305" key="4"/>
<keyword id="KW-0903">Direct protein sequencing</keyword>
<keyword id="KW-0349">Heme</keyword>
<keyword id="KW-0376">Hydrogen peroxide</keyword>
<keyword id="KW-0408">Iron</keyword>
<keyword id="KW-0479">Metal-binding</keyword>
<keyword id="KW-0560">Oxidoreductase</keyword>
<keyword id="KW-0575">Peroxidase</keyword>
<keyword id="KW-1185">Reference proteome</keyword>
<accession>P33569</accession>
<accession>F2R2M1</accession>